<feature type="chain" id="PRO_0000252425" description="Transcription initiation factor TFIID subunit 2">
    <location>
        <begin position="1"/>
        <end position="1104"/>
    </location>
</feature>
<feature type="region of interest" description="Disordered" evidence="3">
    <location>
        <begin position="1040"/>
        <end position="1104"/>
    </location>
</feature>
<feature type="compositionally biased region" description="Basic residues" evidence="3">
    <location>
        <begin position="1048"/>
        <end position="1076"/>
    </location>
</feature>
<feature type="compositionally biased region" description="Polar residues" evidence="3">
    <location>
        <begin position="1090"/>
        <end position="1104"/>
    </location>
</feature>
<feature type="modified residue" description="Phosphoserine" evidence="2">
    <location>
        <position position="1090"/>
    </location>
</feature>
<feature type="modified residue" description="Phosphoserine" evidence="2">
    <location>
        <position position="1093"/>
    </location>
</feature>
<feature type="modified residue" description="Phosphoserine" evidence="2">
    <location>
        <position position="1099"/>
    </location>
</feature>
<feature type="modified residue" description="Phosphoserine" evidence="2">
    <location>
        <position position="1101"/>
    </location>
</feature>
<feature type="modified residue" description="Phosphoserine" evidence="2">
    <location>
        <position position="1103"/>
    </location>
</feature>
<dbReference type="EMBL" id="AC137950">
    <property type="status" value="NOT_ANNOTATED_CDS"/>
    <property type="molecule type" value="Genomic_DNA"/>
</dbReference>
<dbReference type="EMBL" id="AK028828">
    <property type="protein sequence ID" value="BAC26141.1"/>
    <property type="molecule type" value="mRNA"/>
</dbReference>
<dbReference type="EMBL" id="AK051126">
    <property type="protein sequence ID" value="BAC34531.1"/>
    <property type="molecule type" value="mRNA"/>
</dbReference>
<dbReference type="SMR" id="Q8C176"/>
<dbReference type="ComplexPortal" id="CPX-916">
    <property type="entry name" value="TFTC histone acetylation complex"/>
</dbReference>
<dbReference type="ComplexPortal" id="CPX-932">
    <property type="entry name" value="General transcription factor complex TFIID"/>
</dbReference>
<dbReference type="ComplexPortal" id="CPX-959">
    <property type="entry name" value="General transcription factor complex TFIID, Taf4b variant"/>
</dbReference>
<dbReference type="CORUM" id="Q8C176"/>
<dbReference type="FunCoup" id="Q8C176">
    <property type="interactions" value="3430"/>
</dbReference>
<dbReference type="IntAct" id="Q8C176">
    <property type="interactions" value="1"/>
</dbReference>
<dbReference type="STRING" id="10090.ENSMUSP00000043733"/>
<dbReference type="MEROPS" id="M01.972"/>
<dbReference type="GlyGen" id="Q8C176">
    <property type="glycosylation" value="2 sites"/>
</dbReference>
<dbReference type="iPTMnet" id="Q8C176"/>
<dbReference type="PhosphoSitePlus" id="Q8C176"/>
<dbReference type="jPOST" id="Q8C176"/>
<dbReference type="PaxDb" id="10090-ENSMUSP00000043733"/>
<dbReference type="PeptideAtlas" id="Q8C176"/>
<dbReference type="ProteomicsDB" id="263065"/>
<dbReference type="Pumba" id="Q8C176"/>
<dbReference type="AGR" id="MGI:2443028"/>
<dbReference type="MGI" id="MGI:2443028">
    <property type="gene designation" value="Taf2"/>
</dbReference>
<dbReference type="eggNOG" id="KOG1932">
    <property type="taxonomic scope" value="Eukaryota"/>
</dbReference>
<dbReference type="InParanoid" id="Q8C176"/>
<dbReference type="PhylomeDB" id="Q8C176"/>
<dbReference type="Reactome" id="R-MMU-674695">
    <property type="pathway name" value="RNA Polymerase II Pre-transcription Events"/>
</dbReference>
<dbReference type="Reactome" id="R-MMU-6804756">
    <property type="pathway name" value="Regulation of TP53 Activity through Phosphorylation"/>
</dbReference>
<dbReference type="Reactome" id="R-MMU-73776">
    <property type="pathway name" value="RNA Polymerase II Promoter Escape"/>
</dbReference>
<dbReference type="Reactome" id="R-MMU-73779">
    <property type="pathway name" value="RNA Polymerase II Transcription Pre-Initiation And Promoter Opening"/>
</dbReference>
<dbReference type="Reactome" id="R-MMU-75953">
    <property type="pathway name" value="RNA Polymerase II Transcription Initiation"/>
</dbReference>
<dbReference type="Reactome" id="R-MMU-76042">
    <property type="pathway name" value="RNA Polymerase II Transcription Initiation And Promoter Clearance"/>
</dbReference>
<dbReference type="ChiTaRS" id="Taf2">
    <property type="organism name" value="mouse"/>
</dbReference>
<dbReference type="PRO" id="PR:Q8C176"/>
<dbReference type="Proteomes" id="UP000000589">
    <property type="component" value="Unplaced"/>
</dbReference>
<dbReference type="RNAct" id="Q8C176">
    <property type="molecule type" value="protein"/>
</dbReference>
<dbReference type="GO" id="GO:0005634">
    <property type="term" value="C:nucleus"/>
    <property type="evidence" value="ECO:0000266"/>
    <property type="project" value="ComplexPortal"/>
</dbReference>
<dbReference type="GO" id="GO:0005669">
    <property type="term" value="C:transcription factor TFIID complex"/>
    <property type="evidence" value="ECO:0000266"/>
    <property type="project" value="MGI"/>
</dbReference>
<dbReference type="GO" id="GO:0033276">
    <property type="term" value="C:transcription factor TFTC complex"/>
    <property type="evidence" value="ECO:0000303"/>
    <property type="project" value="ComplexPortal"/>
</dbReference>
<dbReference type="GO" id="GO:0042789">
    <property type="term" value="P:mRNA transcription by RNA polymerase II"/>
    <property type="evidence" value="ECO:0000266"/>
    <property type="project" value="ComplexPortal"/>
</dbReference>
<dbReference type="GO" id="GO:0045893">
    <property type="term" value="P:positive regulation of DNA-templated transcription"/>
    <property type="evidence" value="ECO:0000303"/>
    <property type="project" value="ComplexPortal"/>
</dbReference>
<dbReference type="GO" id="GO:0060261">
    <property type="term" value="P:positive regulation of transcription initiation by RNA polymerase II"/>
    <property type="evidence" value="ECO:0000266"/>
    <property type="project" value="ComplexPortal"/>
</dbReference>
<dbReference type="GO" id="GO:0006282">
    <property type="term" value="P:regulation of DNA repair"/>
    <property type="evidence" value="ECO:0000303"/>
    <property type="project" value="ComplexPortal"/>
</dbReference>
<dbReference type="GO" id="GO:0006357">
    <property type="term" value="P:regulation of transcription by RNA polymerase II"/>
    <property type="evidence" value="ECO:0000266"/>
    <property type="project" value="ComplexPortal"/>
</dbReference>
<dbReference type="GO" id="GO:0051123">
    <property type="term" value="P:RNA polymerase II preinitiation complex assembly"/>
    <property type="evidence" value="ECO:0000266"/>
    <property type="project" value="ComplexPortal"/>
</dbReference>
<dbReference type="CDD" id="cd09839">
    <property type="entry name" value="M1_like_TAF2"/>
    <property type="match status" value="1"/>
</dbReference>
<dbReference type="FunFam" id="2.60.40.1730:FF:000003">
    <property type="entry name" value="Transcription initiation factor TFIID subunit 2"/>
    <property type="match status" value="1"/>
</dbReference>
<dbReference type="FunFam" id="1.10.390.10:FF:000005">
    <property type="entry name" value="transcription initiation factor TFIID subunit 2 isoform X1"/>
    <property type="match status" value="1"/>
</dbReference>
<dbReference type="Gene3D" id="1.10.390.10">
    <property type="entry name" value="Neutral Protease Domain 2"/>
    <property type="match status" value="1"/>
</dbReference>
<dbReference type="Gene3D" id="2.60.40.1730">
    <property type="entry name" value="tricorn interacting facor f3 domain"/>
    <property type="match status" value="1"/>
</dbReference>
<dbReference type="InterPro" id="IPR042097">
    <property type="entry name" value="Aminopeptidase_N-like_N_sf"/>
</dbReference>
<dbReference type="InterPro" id="IPR016024">
    <property type="entry name" value="ARM-type_fold"/>
</dbReference>
<dbReference type="InterPro" id="IPR027268">
    <property type="entry name" value="Peptidase_M4/M1_CTD_sf"/>
</dbReference>
<dbReference type="InterPro" id="IPR037813">
    <property type="entry name" value="TAF2"/>
</dbReference>
<dbReference type="PANTHER" id="PTHR15137">
    <property type="entry name" value="TRANSCRIPTION INITIATION FACTOR TFIID"/>
    <property type="match status" value="1"/>
</dbReference>
<dbReference type="PANTHER" id="PTHR15137:SF9">
    <property type="entry name" value="TRANSCRIPTION INITIATION FACTOR TFIID SUBUNIT 2"/>
    <property type="match status" value="1"/>
</dbReference>
<dbReference type="Pfam" id="PF25316">
    <property type="entry name" value="TAF2_3rd"/>
    <property type="match status" value="1"/>
</dbReference>
<dbReference type="SUPFAM" id="SSF48371">
    <property type="entry name" value="ARM repeat"/>
    <property type="match status" value="1"/>
</dbReference>
<dbReference type="SUPFAM" id="SSF63737">
    <property type="entry name" value="Leukotriene A4 hydrolase N-terminal domain"/>
    <property type="match status" value="1"/>
</dbReference>
<dbReference type="SUPFAM" id="SSF55486">
    <property type="entry name" value="Metalloproteases ('zincins'), catalytic domain"/>
    <property type="match status" value="1"/>
</dbReference>
<evidence type="ECO:0000250" key="1"/>
<evidence type="ECO:0000250" key="2">
    <source>
        <dbReference type="UniProtKB" id="Q6P1X5"/>
    </source>
</evidence>
<evidence type="ECO:0000256" key="3">
    <source>
        <dbReference type="SAM" id="MobiDB-lite"/>
    </source>
</evidence>
<evidence type="ECO:0000305" key="4"/>
<keyword id="KW-0539">Nucleus</keyword>
<keyword id="KW-0597">Phosphoprotein</keyword>
<keyword id="KW-1185">Reference proteome</keyword>
<keyword id="KW-0804">Transcription</keyword>
<keyword id="KW-0805">Transcription regulation</keyword>
<comment type="function">
    <text evidence="2">The TFIID basal transcription factor complex plays a major role in the initiation of RNA polymerase II (Pol II)-dependent transcription. TFIID recognizes and binds promoters with or without a TATA box via its subunit TBP, a TATA-box-binding protein, and promotes assembly of the pre-initiation complex (PIC). The TFIID complex consists of TBP and TBP-associated factors (TAFs), including TAF1, TAF2, TAF3, TAF4, TAF5, TAF6, TAF7, TAF8, TAF9, TAF10, TAF11, TAF12 and TAF13. TAF2 forms a promoter DNA binding subcomplex of TFIID, together with TAF7 and TAF1.</text>
</comment>
<comment type="subunit">
    <text evidence="2">Component of the TFIID basal transcription factor complex, composed of TATA-box-binding protein TBP, and a number of TBP-associated factors (TAFs), including TAF1, TAF2, TAF3, TAF4, TAF5, TAF6, TAF7, TAF8, TAF9, TAF10, TAF11, TAF12 and TAF13. Interacts with TAF2C1. Component of the TFTC-HAT complex.</text>
</comment>
<comment type="subcellular location">
    <subcellularLocation>
        <location evidence="1">Nucleus</location>
    </subcellularLocation>
</comment>
<comment type="similarity">
    <text evidence="4">Belongs to the TAF2 family.</text>
</comment>
<sequence>MNRKKGDKGFESPRPYKLTHQVVCINNINFQRKSVVGFVELTIFPTVANLNRIKLNSKQCRIYRVRINDLEAAFIYNDPTLEVCHSESKQRNLNYFSNAYAAAVSAVDPDAGNGELCIKVPSELWKHVDELKVLKIHINFSLDQPKGGLHFVVPSVEGSMAERGAHVFSCGYQNSTRFWFPCVDSYSELCTWKLEFTVDAAMVAVSNGDLVETVYTHDMRKKTFHYMLTIPTAASNISLAIGPFEILVDPYMHEVTHFCLPQLLPLLKHTTSYIHEVFEFYEEILTCRYPYSCFKTVFIDEAYVEVAAYASMSIFSTNLLHSAMIIDETPLTRRCLAQALAQQFFGCFISRMSWSDEWVLKGISGYIYGLWMKKTFGVNEYHHWIKEELDKIVAYELKTGGVLLHPIFGGGKEKDNPASHLHFSIKHPHTLSWEYYTMFQCKAHLVMRLIENRISMEFMLQVFNKLLSLASTASSQKFQSHMWSQMLVSTYGFLKSISNVSGKDIQPLIKQWLDQSGVVKFYGSFAFNRKRNVLELEIKQDYTSPGTQKYVGPLKVTVQELDGSFNHTLQIEENSLKHDIPCHSKSRRNKKKKIPLMNGEEVDMDLSAMEADSPLLWIRIDPDMSVLRKVEFEQADFMWQYELRYERDVVAQQESILALEKFPTPASRLALTDILEQEQCFYRVRMSACFCLAKIANSMVSTWTGPPAMKSLFTRMFCCKTCPNIVKTNNFMSFQSYFLQKTMPVAMALLRDVHNLCPKEVLTFILDLIKYNDNRKNKFSDNYYRAEMIDALANSVTPAVSVNNEVRTLDNLNPDVRLILEEITRFLNMEKLLPSYRHTITVSCLRAIRVLQKNGHVPSDASLFKSYAEYGHFVDIRIAALEAVVDYTKVDRSYEELQWLLNMIQTDPVPYVRHKILNMLTKNPPFTKNMESPLCNEALVDQLWKLMNSGTAHDWRLRCGAVDLYFTLFGLSRPSCLPLPELGLVLNLKEKKAVLNPTIIPEAGVGNQFSSSQDEEEVDMDTVHDSQAFISHHLNMLERPSTPGLSKYRPHHHHHHHEHKKKKKKHKHKHKHKHKHDSKDKDREPFAFSSPASGRSVRSPSLSD</sequence>
<protein>
    <recommendedName>
        <fullName>Transcription initiation factor TFIID subunit 2</fullName>
    </recommendedName>
    <alternativeName>
        <fullName>TBP-associated factor 150 kDa</fullName>
    </alternativeName>
    <alternativeName>
        <fullName>Transcription initiation factor TFIID 150 kDa subunit</fullName>
        <shortName>TAF(II)150</shortName>
        <shortName>TAFII-150</shortName>
        <shortName>TAFII150</shortName>
    </alternativeName>
</protein>
<gene>
    <name type="primary">Taf2</name>
</gene>
<organism>
    <name type="scientific">Mus musculus</name>
    <name type="common">Mouse</name>
    <dbReference type="NCBI Taxonomy" id="10090"/>
    <lineage>
        <taxon>Eukaryota</taxon>
        <taxon>Metazoa</taxon>
        <taxon>Chordata</taxon>
        <taxon>Craniata</taxon>
        <taxon>Vertebrata</taxon>
        <taxon>Euteleostomi</taxon>
        <taxon>Mammalia</taxon>
        <taxon>Eutheria</taxon>
        <taxon>Euarchontoglires</taxon>
        <taxon>Glires</taxon>
        <taxon>Rodentia</taxon>
        <taxon>Myomorpha</taxon>
        <taxon>Muroidea</taxon>
        <taxon>Muridae</taxon>
        <taxon>Murinae</taxon>
        <taxon>Mus</taxon>
        <taxon>Mus</taxon>
    </lineage>
</organism>
<proteinExistence type="evidence at transcript level"/>
<name>TAF2_MOUSE</name>
<reference key="1">
    <citation type="journal article" date="2009" name="PLoS Biol.">
        <title>Lineage-specific biology revealed by a finished genome assembly of the mouse.</title>
        <authorList>
            <person name="Church D.M."/>
            <person name="Goodstadt L."/>
            <person name="Hillier L.W."/>
            <person name="Zody M.C."/>
            <person name="Goldstein S."/>
            <person name="She X."/>
            <person name="Bult C.J."/>
            <person name="Agarwala R."/>
            <person name="Cherry J.L."/>
            <person name="DiCuccio M."/>
            <person name="Hlavina W."/>
            <person name="Kapustin Y."/>
            <person name="Meric P."/>
            <person name="Maglott D."/>
            <person name="Birtle Z."/>
            <person name="Marques A.C."/>
            <person name="Graves T."/>
            <person name="Zhou S."/>
            <person name="Teague B."/>
            <person name="Potamousis K."/>
            <person name="Churas C."/>
            <person name="Place M."/>
            <person name="Herschleb J."/>
            <person name="Runnheim R."/>
            <person name="Forrest D."/>
            <person name="Amos-Landgraf J."/>
            <person name="Schwartz D.C."/>
            <person name="Cheng Z."/>
            <person name="Lindblad-Toh K."/>
            <person name="Eichler E.E."/>
            <person name="Ponting C.P."/>
        </authorList>
    </citation>
    <scope>NUCLEOTIDE SEQUENCE [LARGE SCALE GENOMIC DNA]</scope>
    <source>
        <strain>C57BL/6J</strain>
    </source>
</reference>
<reference key="2">
    <citation type="journal article" date="2005" name="Science">
        <title>The transcriptional landscape of the mammalian genome.</title>
        <authorList>
            <person name="Carninci P."/>
            <person name="Kasukawa T."/>
            <person name="Katayama S."/>
            <person name="Gough J."/>
            <person name="Frith M.C."/>
            <person name="Maeda N."/>
            <person name="Oyama R."/>
            <person name="Ravasi T."/>
            <person name="Lenhard B."/>
            <person name="Wells C."/>
            <person name="Kodzius R."/>
            <person name="Shimokawa K."/>
            <person name="Bajic V.B."/>
            <person name="Brenner S.E."/>
            <person name="Batalov S."/>
            <person name="Forrest A.R."/>
            <person name="Zavolan M."/>
            <person name="Davis M.J."/>
            <person name="Wilming L.G."/>
            <person name="Aidinis V."/>
            <person name="Allen J.E."/>
            <person name="Ambesi-Impiombato A."/>
            <person name="Apweiler R."/>
            <person name="Aturaliya R.N."/>
            <person name="Bailey T.L."/>
            <person name="Bansal M."/>
            <person name="Baxter L."/>
            <person name="Beisel K.W."/>
            <person name="Bersano T."/>
            <person name="Bono H."/>
            <person name="Chalk A.M."/>
            <person name="Chiu K.P."/>
            <person name="Choudhary V."/>
            <person name="Christoffels A."/>
            <person name="Clutterbuck D.R."/>
            <person name="Crowe M.L."/>
            <person name="Dalla E."/>
            <person name="Dalrymple B.P."/>
            <person name="de Bono B."/>
            <person name="Della Gatta G."/>
            <person name="di Bernardo D."/>
            <person name="Down T."/>
            <person name="Engstrom P."/>
            <person name="Fagiolini M."/>
            <person name="Faulkner G."/>
            <person name="Fletcher C.F."/>
            <person name="Fukushima T."/>
            <person name="Furuno M."/>
            <person name="Futaki S."/>
            <person name="Gariboldi M."/>
            <person name="Georgii-Hemming P."/>
            <person name="Gingeras T.R."/>
            <person name="Gojobori T."/>
            <person name="Green R.E."/>
            <person name="Gustincich S."/>
            <person name="Harbers M."/>
            <person name="Hayashi Y."/>
            <person name="Hensch T.K."/>
            <person name="Hirokawa N."/>
            <person name="Hill D."/>
            <person name="Huminiecki L."/>
            <person name="Iacono M."/>
            <person name="Ikeo K."/>
            <person name="Iwama A."/>
            <person name="Ishikawa T."/>
            <person name="Jakt M."/>
            <person name="Kanapin A."/>
            <person name="Katoh M."/>
            <person name="Kawasawa Y."/>
            <person name="Kelso J."/>
            <person name="Kitamura H."/>
            <person name="Kitano H."/>
            <person name="Kollias G."/>
            <person name="Krishnan S.P."/>
            <person name="Kruger A."/>
            <person name="Kummerfeld S.K."/>
            <person name="Kurochkin I.V."/>
            <person name="Lareau L.F."/>
            <person name="Lazarevic D."/>
            <person name="Lipovich L."/>
            <person name="Liu J."/>
            <person name="Liuni S."/>
            <person name="McWilliam S."/>
            <person name="Madan Babu M."/>
            <person name="Madera M."/>
            <person name="Marchionni L."/>
            <person name="Matsuda H."/>
            <person name="Matsuzawa S."/>
            <person name="Miki H."/>
            <person name="Mignone F."/>
            <person name="Miyake S."/>
            <person name="Morris K."/>
            <person name="Mottagui-Tabar S."/>
            <person name="Mulder N."/>
            <person name="Nakano N."/>
            <person name="Nakauchi H."/>
            <person name="Ng P."/>
            <person name="Nilsson R."/>
            <person name="Nishiguchi S."/>
            <person name="Nishikawa S."/>
            <person name="Nori F."/>
            <person name="Ohara O."/>
            <person name="Okazaki Y."/>
            <person name="Orlando V."/>
            <person name="Pang K.C."/>
            <person name="Pavan W.J."/>
            <person name="Pavesi G."/>
            <person name="Pesole G."/>
            <person name="Petrovsky N."/>
            <person name="Piazza S."/>
            <person name="Reed J."/>
            <person name="Reid J.F."/>
            <person name="Ring B.Z."/>
            <person name="Ringwald M."/>
            <person name="Rost B."/>
            <person name="Ruan Y."/>
            <person name="Salzberg S.L."/>
            <person name="Sandelin A."/>
            <person name="Schneider C."/>
            <person name="Schoenbach C."/>
            <person name="Sekiguchi K."/>
            <person name="Semple C.A."/>
            <person name="Seno S."/>
            <person name="Sessa L."/>
            <person name="Sheng Y."/>
            <person name="Shibata Y."/>
            <person name="Shimada H."/>
            <person name="Shimada K."/>
            <person name="Silva D."/>
            <person name="Sinclair B."/>
            <person name="Sperling S."/>
            <person name="Stupka E."/>
            <person name="Sugiura K."/>
            <person name="Sultana R."/>
            <person name="Takenaka Y."/>
            <person name="Taki K."/>
            <person name="Tammoja K."/>
            <person name="Tan S.L."/>
            <person name="Tang S."/>
            <person name="Taylor M.S."/>
            <person name="Tegner J."/>
            <person name="Teichmann S.A."/>
            <person name="Ueda H.R."/>
            <person name="van Nimwegen E."/>
            <person name="Verardo R."/>
            <person name="Wei C.L."/>
            <person name="Yagi K."/>
            <person name="Yamanishi H."/>
            <person name="Zabarovsky E."/>
            <person name="Zhu S."/>
            <person name="Zimmer A."/>
            <person name="Hide W."/>
            <person name="Bult C."/>
            <person name="Grimmond S.M."/>
            <person name="Teasdale R.D."/>
            <person name="Liu E.T."/>
            <person name="Brusic V."/>
            <person name="Quackenbush J."/>
            <person name="Wahlestedt C."/>
            <person name="Mattick J.S."/>
            <person name="Hume D.A."/>
            <person name="Kai C."/>
            <person name="Sasaki D."/>
            <person name="Tomaru Y."/>
            <person name="Fukuda S."/>
            <person name="Kanamori-Katayama M."/>
            <person name="Suzuki M."/>
            <person name="Aoki J."/>
            <person name="Arakawa T."/>
            <person name="Iida J."/>
            <person name="Imamura K."/>
            <person name="Itoh M."/>
            <person name="Kato T."/>
            <person name="Kawaji H."/>
            <person name="Kawagashira N."/>
            <person name="Kawashima T."/>
            <person name="Kojima M."/>
            <person name="Kondo S."/>
            <person name="Konno H."/>
            <person name="Nakano K."/>
            <person name="Ninomiya N."/>
            <person name="Nishio T."/>
            <person name="Okada M."/>
            <person name="Plessy C."/>
            <person name="Shibata K."/>
            <person name="Shiraki T."/>
            <person name="Suzuki S."/>
            <person name="Tagami M."/>
            <person name="Waki K."/>
            <person name="Watahiki A."/>
            <person name="Okamura-Oho Y."/>
            <person name="Suzuki H."/>
            <person name="Kawai J."/>
            <person name="Hayashizaki Y."/>
        </authorList>
    </citation>
    <scope>NUCLEOTIDE SEQUENCE [LARGE SCALE MRNA] OF 1-610</scope>
    <source>
        <strain>C57BL/6J</strain>
        <tissue>Skin</tissue>
        <tissue>Spinal ganglion</tissue>
    </source>
</reference>
<accession>Q8C176</accession>
<accession>Q8BKQ7</accession>